<proteinExistence type="inferred from homology"/>
<reference key="1">
    <citation type="journal article" date="2009" name="Proc. Natl. Acad. Sci. U.S.A.">
        <title>Biogeography of the Sulfolobus islandicus pan-genome.</title>
        <authorList>
            <person name="Reno M.L."/>
            <person name="Held N.L."/>
            <person name="Fields C.J."/>
            <person name="Burke P.V."/>
            <person name="Whitaker R.J."/>
        </authorList>
    </citation>
    <scope>NUCLEOTIDE SEQUENCE [LARGE SCALE GENOMIC DNA]</scope>
    <source>
        <strain>L.S.2.15 / Lassen #1</strain>
    </source>
</reference>
<evidence type="ECO:0000255" key="1">
    <source>
        <dbReference type="HAMAP-Rule" id="MF_01615"/>
    </source>
</evidence>
<dbReference type="EC" id="4.3.3.6" evidence="1"/>
<dbReference type="EC" id="3.5.1.2" evidence="1"/>
<dbReference type="EMBL" id="CP001399">
    <property type="protein sequence ID" value="ACP35670.1"/>
    <property type="molecule type" value="Genomic_DNA"/>
</dbReference>
<dbReference type="RefSeq" id="WP_012713817.1">
    <property type="nucleotide sequence ID" value="NC_012589.1"/>
</dbReference>
<dbReference type="SMR" id="C3MQK7"/>
<dbReference type="GeneID" id="7799300"/>
<dbReference type="KEGG" id="sis:LS215_1666"/>
<dbReference type="HOGENOM" id="CLU_069674_2_0_2"/>
<dbReference type="OrthoDB" id="26717at2157"/>
<dbReference type="UniPathway" id="UPA00245"/>
<dbReference type="Proteomes" id="UP000001747">
    <property type="component" value="Chromosome"/>
</dbReference>
<dbReference type="GO" id="GO:0005829">
    <property type="term" value="C:cytosol"/>
    <property type="evidence" value="ECO:0007669"/>
    <property type="project" value="TreeGrafter"/>
</dbReference>
<dbReference type="GO" id="GO:1903600">
    <property type="term" value="C:glutaminase complex"/>
    <property type="evidence" value="ECO:0007669"/>
    <property type="project" value="TreeGrafter"/>
</dbReference>
<dbReference type="GO" id="GO:0004359">
    <property type="term" value="F:glutaminase activity"/>
    <property type="evidence" value="ECO:0007669"/>
    <property type="project" value="UniProtKB-UniRule"/>
</dbReference>
<dbReference type="GO" id="GO:0036381">
    <property type="term" value="F:pyridoxal 5'-phosphate synthase (glutamine hydrolysing) activity"/>
    <property type="evidence" value="ECO:0007669"/>
    <property type="project" value="UniProtKB-UniRule"/>
</dbReference>
<dbReference type="GO" id="GO:0006543">
    <property type="term" value="P:glutamine catabolic process"/>
    <property type="evidence" value="ECO:0007669"/>
    <property type="project" value="UniProtKB-UniRule"/>
</dbReference>
<dbReference type="GO" id="GO:0042823">
    <property type="term" value="P:pyridoxal phosphate biosynthetic process"/>
    <property type="evidence" value="ECO:0007669"/>
    <property type="project" value="UniProtKB-UniRule"/>
</dbReference>
<dbReference type="GO" id="GO:0008614">
    <property type="term" value="P:pyridoxine metabolic process"/>
    <property type="evidence" value="ECO:0007669"/>
    <property type="project" value="TreeGrafter"/>
</dbReference>
<dbReference type="CDD" id="cd01749">
    <property type="entry name" value="GATase1_PB"/>
    <property type="match status" value="1"/>
</dbReference>
<dbReference type="FunFam" id="3.40.50.880:FF:000041">
    <property type="entry name" value="Glutamine amidotransferase subunit pdxT, putative"/>
    <property type="match status" value="1"/>
</dbReference>
<dbReference type="Gene3D" id="3.40.50.880">
    <property type="match status" value="1"/>
</dbReference>
<dbReference type="HAMAP" id="MF_01615">
    <property type="entry name" value="PdxT"/>
    <property type="match status" value="1"/>
</dbReference>
<dbReference type="InterPro" id="IPR029062">
    <property type="entry name" value="Class_I_gatase-like"/>
</dbReference>
<dbReference type="InterPro" id="IPR002161">
    <property type="entry name" value="PdxT/SNO"/>
</dbReference>
<dbReference type="InterPro" id="IPR021196">
    <property type="entry name" value="PdxT/SNO_CS"/>
</dbReference>
<dbReference type="NCBIfam" id="TIGR03800">
    <property type="entry name" value="PLP_synth_Pdx2"/>
    <property type="match status" value="1"/>
</dbReference>
<dbReference type="PANTHER" id="PTHR31559">
    <property type="entry name" value="PYRIDOXAL 5'-PHOSPHATE SYNTHASE SUBUNIT SNO"/>
    <property type="match status" value="1"/>
</dbReference>
<dbReference type="PANTHER" id="PTHR31559:SF0">
    <property type="entry name" value="PYRIDOXAL 5'-PHOSPHATE SYNTHASE SUBUNIT SNO1-RELATED"/>
    <property type="match status" value="1"/>
</dbReference>
<dbReference type="Pfam" id="PF01174">
    <property type="entry name" value="SNO"/>
    <property type="match status" value="1"/>
</dbReference>
<dbReference type="PIRSF" id="PIRSF005639">
    <property type="entry name" value="Glut_amidoT_SNO"/>
    <property type="match status" value="1"/>
</dbReference>
<dbReference type="SUPFAM" id="SSF52317">
    <property type="entry name" value="Class I glutamine amidotransferase-like"/>
    <property type="match status" value="1"/>
</dbReference>
<dbReference type="PROSITE" id="PS01236">
    <property type="entry name" value="PDXT_SNO_1"/>
    <property type="match status" value="1"/>
</dbReference>
<dbReference type="PROSITE" id="PS51130">
    <property type="entry name" value="PDXT_SNO_2"/>
    <property type="match status" value="1"/>
</dbReference>
<keyword id="KW-0315">Glutamine amidotransferase</keyword>
<keyword id="KW-0378">Hydrolase</keyword>
<keyword id="KW-0456">Lyase</keyword>
<keyword id="KW-0663">Pyridoxal phosphate</keyword>
<accession>C3MQK7</accession>
<protein>
    <recommendedName>
        <fullName evidence="1">Pyridoxal 5'-phosphate synthase subunit PdxT</fullName>
        <ecNumber evidence="1">4.3.3.6</ecNumber>
    </recommendedName>
    <alternativeName>
        <fullName evidence="1">Pdx2</fullName>
    </alternativeName>
    <alternativeName>
        <fullName evidence="1">Pyridoxal 5'-phosphate synthase glutaminase subunit</fullName>
        <ecNumber evidence="1">3.5.1.2</ecNumber>
    </alternativeName>
</protein>
<feature type="chain" id="PRO_1000215723" description="Pyridoxal 5'-phosphate synthase subunit PdxT">
    <location>
        <begin position="1"/>
        <end position="200"/>
    </location>
</feature>
<feature type="active site" description="Nucleophile" evidence="1">
    <location>
        <position position="84"/>
    </location>
</feature>
<feature type="active site" description="Charge relay system" evidence="1">
    <location>
        <position position="181"/>
    </location>
</feature>
<feature type="active site" description="Charge relay system" evidence="1">
    <location>
        <position position="183"/>
    </location>
</feature>
<feature type="binding site" evidence="1">
    <location>
        <begin position="52"/>
        <end position="54"/>
    </location>
    <ligand>
        <name>L-glutamine</name>
        <dbReference type="ChEBI" id="CHEBI:58359"/>
    </ligand>
</feature>
<feature type="binding site" evidence="1">
    <location>
        <position position="116"/>
    </location>
    <ligand>
        <name>L-glutamine</name>
        <dbReference type="ChEBI" id="CHEBI:58359"/>
    </ligand>
</feature>
<feature type="binding site" evidence="1">
    <location>
        <begin position="145"/>
        <end position="146"/>
    </location>
    <ligand>
        <name>L-glutamine</name>
        <dbReference type="ChEBI" id="CHEBI:58359"/>
    </ligand>
</feature>
<organism>
    <name type="scientific">Saccharolobus islandicus (strain L.S.2.15 / Lassen #1)</name>
    <name type="common">Sulfolobus islandicus</name>
    <dbReference type="NCBI Taxonomy" id="429572"/>
    <lineage>
        <taxon>Archaea</taxon>
        <taxon>Thermoproteota</taxon>
        <taxon>Thermoprotei</taxon>
        <taxon>Sulfolobales</taxon>
        <taxon>Sulfolobaceae</taxon>
        <taxon>Saccharolobus</taxon>
    </lineage>
</organism>
<sequence length="200" mass="21853">MKIGIIAYQGSFEEHYLQLKRAFDKWSINGEITPVKIPKDLKDIDGVIIPGGESTTIGLVAKRLGILDELKEKITSGLPVMGTCAGAIMLAKEVSDAKVGKTSQPLIGTMNISIIRNYYGRQRESFETIIDLSKIGKGKANVVFIRAPAITKLWGKAQSLAELNGVTVLAEENNILATTFHPELSDTTSIHEYFLHLVKG</sequence>
<gene>
    <name evidence="1" type="primary">pdxT</name>
    <name type="ordered locus">LS215_1666</name>
</gene>
<name>PDXT_SACI2</name>
<comment type="function">
    <text evidence="1">Catalyzes the hydrolysis of glutamine to glutamate and ammonia as part of the biosynthesis of pyridoxal 5'-phosphate. The resulting ammonia molecule is channeled to the active site of PdxS.</text>
</comment>
<comment type="catalytic activity">
    <reaction evidence="1">
        <text>aldehydo-D-ribose 5-phosphate + D-glyceraldehyde 3-phosphate + L-glutamine = pyridoxal 5'-phosphate + L-glutamate + phosphate + 3 H2O + H(+)</text>
        <dbReference type="Rhea" id="RHEA:31507"/>
        <dbReference type="ChEBI" id="CHEBI:15377"/>
        <dbReference type="ChEBI" id="CHEBI:15378"/>
        <dbReference type="ChEBI" id="CHEBI:29985"/>
        <dbReference type="ChEBI" id="CHEBI:43474"/>
        <dbReference type="ChEBI" id="CHEBI:58273"/>
        <dbReference type="ChEBI" id="CHEBI:58359"/>
        <dbReference type="ChEBI" id="CHEBI:59776"/>
        <dbReference type="ChEBI" id="CHEBI:597326"/>
        <dbReference type="EC" id="4.3.3.6"/>
    </reaction>
</comment>
<comment type="catalytic activity">
    <reaction evidence="1">
        <text>L-glutamine + H2O = L-glutamate + NH4(+)</text>
        <dbReference type="Rhea" id="RHEA:15889"/>
        <dbReference type="ChEBI" id="CHEBI:15377"/>
        <dbReference type="ChEBI" id="CHEBI:28938"/>
        <dbReference type="ChEBI" id="CHEBI:29985"/>
        <dbReference type="ChEBI" id="CHEBI:58359"/>
        <dbReference type="EC" id="3.5.1.2"/>
    </reaction>
</comment>
<comment type="pathway">
    <text evidence="1">Cofactor biosynthesis; pyridoxal 5'-phosphate biosynthesis.</text>
</comment>
<comment type="subunit">
    <text evidence="1">In the presence of PdxS, forms a dodecamer of heterodimers. Only shows activity in the heterodimer.</text>
</comment>
<comment type="similarity">
    <text evidence="1">Belongs to the glutaminase PdxT/SNO family.</text>
</comment>